<gene>
    <name type="primary">RAB2A</name>
</gene>
<keyword id="KW-0256">Endoplasmic reticulum</keyword>
<keyword id="KW-0333">Golgi apparatus</keyword>
<keyword id="KW-0342">GTP-binding</keyword>
<keyword id="KW-0449">Lipoprotein</keyword>
<keyword id="KW-0472">Membrane</keyword>
<keyword id="KW-0547">Nucleotide-binding</keyword>
<keyword id="KW-0636">Prenylation</keyword>
<keyword id="KW-0653">Protein transport</keyword>
<keyword id="KW-1185">Reference proteome</keyword>
<keyword id="KW-0813">Transport</keyword>
<accession>P49103</accession>
<accession>B6SI49</accession>
<reference key="1">
    <citation type="submission" date="1995-03" db="EMBL/GenBank/DDBJ databases">
        <authorList>
            <person name="Laughner B.J."/>
            <person name="Ferl R.J."/>
            <person name="Almira E.C."/>
        </authorList>
    </citation>
    <scope>NUCLEOTIDE SEQUENCE [MRNA]</scope>
</reference>
<reference key="2">
    <citation type="journal article" date="2009" name="Plant Mol. Biol.">
        <title>Insights into corn genes derived from large-scale cDNA sequencing.</title>
        <authorList>
            <person name="Alexandrov N.N."/>
            <person name="Brover V.V."/>
            <person name="Freidin S."/>
            <person name="Troukhan M.E."/>
            <person name="Tatarinova T.V."/>
            <person name="Zhang H."/>
            <person name="Swaller T.J."/>
            <person name="Lu Y.-P."/>
            <person name="Bouck J."/>
            <person name="Flavell R.B."/>
            <person name="Feldmann K.A."/>
        </authorList>
    </citation>
    <scope>NUCLEOTIDE SEQUENCE [LARGE SCALE MRNA]</scope>
</reference>
<reference key="3">
    <citation type="journal article" date="2009" name="PLoS Genet.">
        <title>Sequencing, mapping, and analysis of 27,455 maize full-length cDNAs.</title>
        <authorList>
            <person name="Soderlund C."/>
            <person name="Descour A."/>
            <person name="Kudrna D."/>
            <person name="Bomhoff M."/>
            <person name="Boyd L."/>
            <person name="Currie J."/>
            <person name="Angelova A."/>
            <person name="Collura K."/>
            <person name="Wissotski M."/>
            <person name="Ashley E."/>
            <person name="Morrow D."/>
            <person name="Fernandes J."/>
            <person name="Walbot V."/>
            <person name="Yu Y."/>
        </authorList>
    </citation>
    <scope>NUCLEOTIDE SEQUENCE [LARGE SCALE MRNA]</scope>
    <source>
        <strain>cv. B73</strain>
    </source>
</reference>
<protein>
    <recommendedName>
        <fullName>Ras-related protein Rab-2-A</fullName>
    </recommendedName>
</protein>
<sequence length="209" mass="22988">MSYAYLFKYIIIGDTGVGKSCLLLQFTDKRFQPVHDLTIGVEFGARMITIDNKPIKLQIWDTAGQESFRSITRSYYRGAAGALLVYDITRRETFNHLASWLEDARQHANANMTIMLVGNKCDLSHRRAVSYEEGEQFAKEHGLIFMEASAKTAQNVEEAFVKTAGAIYKKIQDGVFDVSNESYGIKVGYVVPGQSGGAGSSSQGGGCCS</sequence>
<evidence type="ECO:0000250" key="1"/>
<evidence type="ECO:0000250" key="2">
    <source>
        <dbReference type="UniProtKB" id="P61019"/>
    </source>
</evidence>
<evidence type="ECO:0000250" key="3">
    <source>
        <dbReference type="UniProtKB" id="P62820"/>
    </source>
</evidence>
<evidence type="ECO:0000305" key="4"/>
<dbReference type="EMBL" id="U22432">
    <property type="protein sequence ID" value="AAA63901.1"/>
    <property type="molecule type" value="mRNA"/>
</dbReference>
<dbReference type="EMBL" id="EU952414">
    <property type="protein sequence ID" value="ACG24532.1"/>
    <property type="molecule type" value="mRNA"/>
</dbReference>
<dbReference type="EMBL" id="BT065116">
    <property type="protein sequence ID" value="ACN30992.1"/>
    <property type="molecule type" value="mRNA"/>
</dbReference>
<dbReference type="PIR" id="T02242">
    <property type="entry name" value="T02242"/>
</dbReference>
<dbReference type="RefSeq" id="NP_001106078.1">
    <property type="nucleotide sequence ID" value="NM_001112608.1"/>
</dbReference>
<dbReference type="SMR" id="P49103"/>
<dbReference type="FunCoup" id="P49103">
    <property type="interactions" value="2844"/>
</dbReference>
<dbReference type="STRING" id="4577.P49103"/>
<dbReference type="PaxDb" id="4577-GRMZM2G330430_P02"/>
<dbReference type="ProMEX" id="P49103"/>
<dbReference type="GeneID" id="100127017"/>
<dbReference type="KEGG" id="zma:100127017"/>
<dbReference type="MaizeGDB" id="121973"/>
<dbReference type="eggNOG" id="KOG0098">
    <property type="taxonomic scope" value="Eukaryota"/>
</dbReference>
<dbReference type="HOGENOM" id="CLU_041217_23_1_1"/>
<dbReference type="InParanoid" id="P49103"/>
<dbReference type="OrthoDB" id="9989112at2759"/>
<dbReference type="Proteomes" id="UP000007305">
    <property type="component" value="Unplaced"/>
</dbReference>
<dbReference type="ExpressionAtlas" id="P49103">
    <property type="expression patterns" value="baseline and differential"/>
</dbReference>
<dbReference type="GO" id="GO:0005789">
    <property type="term" value="C:endoplasmic reticulum membrane"/>
    <property type="evidence" value="ECO:0007669"/>
    <property type="project" value="UniProtKB-SubCell"/>
</dbReference>
<dbReference type="GO" id="GO:0005794">
    <property type="term" value="C:Golgi apparatus"/>
    <property type="evidence" value="ECO:0000318"/>
    <property type="project" value="GO_Central"/>
</dbReference>
<dbReference type="GO" id="GO:0000139">
    <property type="term" value="C:Golgi membrane"/>
    <property type="evidence" value="ECO:0007669"/>
    <property type="project" value="UniProtKB-SubCell"/>
</dbReference>
<dbReference type="GO" id="GO:0005525">
    <property type="term" value="F:GTP binding"/>
    <property type="evidence" value="ECO:0000318"/>
    <property type="project" value="GO_Central"/>
</dbReference>
<dbReference type="GO" id="GO:0003924">
    <property type="term" value="F:GTPase activity"/>
    <property type="evidence" value="ECO:0000318"/>
    <property type="project" value="GO_Central"/>
</dbReference>
<dbReference type="GO" id="GO:0015031">
    <property type="term" value="P:protein transport"/>
    <property type="evidence" value="ECO:0007669"/>
    <property type="project" value="UniProtKB-KW"/>
</dbReference>
<dbReference type="GO" id="GO:0016192">
    <property type="term" value="P:vesicle-mediated transport"/>
    <property type="evidence" value="ECO:0000318"/>
    <property type="project" value="GO_Central"/>
</dbReference>
<dbReference type="CDD" id="cd01866">
    <property type="entry name" value="Rab2"/>
    <property type="match status" value="1"/>
</dbReference>
<dbReference type="FunFam" id="3.40.50.300:FF:000263">
    <property type="entry name" value="Ras-related protein RABB1c"/>
    <property type="match status" value="1"/>
</dbReference>
<dbReference type="Gene3D" id="3.40.50.300">
    <property type="entry name" value="P-loop containing nucleotide triphosphate hydrolases"/>
    <property type="match status" value="1"/>
</dbReference>
<dbReference type="InterPro" id="IPR027417">
    <property type="entry name" value="P-loop_NTPase"/>
</dbReference>
<dbReference type="InterPro" id="IPR050209">
    <property type="entry name" value="Rab_GTPases_membrane_traffic"/>
</dbReference>
<dbReference type="InterPro" id="IPR005225">
    <property type="entry name" value="Small_GTP-bd"/>
</dbReference>
<dbReference type="InterPro" id="IPR001806">
    <property type="entry name" value="Small_GTPase"/>
</dbReference>
<dbReference type="NCBIfam" id="TIGR00231">
    <property type="entry name" value="small_GTP"/>
    <property type="match status" value="1"/>
</dbReference>
<dbReference type="PANTHER" id="PTHR47979">
    <property type="entry name" value="DRAB11-RELATED"/>
    <property type="match status" value="1"/>
</dbReference>
<dbReference type="Pfam" id="PF00071">
    <property type="entry name" value="Ras"/>
    <property type="match status" value="1"/>
</dbReference>
<dbReference type="PRINTS" id="PR00449">
    <property type="entry name" value="RASTRNSFRMNG"/>
</dbReference>
<dbReference type="SMART" id="SM00175">
    <property type="entry name" value="RAB"/>
    <property type="match status" value="1"/>
</dbReference>
<dbReference type="SMART" id="SM00176">
    <property type="entry name" value="RAN"/>
    <property type="match status" value="1"/>
</dbReference>
<dbReference type="SMART" id="SM00173">
    <property type="entry name" value="RAS"/>
    <property type="match status" value="1"/>
</dbReference>
<dbReference type="SMART" id="SM00174">
    <property type="entry name" value="RHO"/>
    <property type="match status" value="1"/>
</dbReference>
<dbReference type="SUPFAM" id="SSF52540">
    <property type="entry name" value="P-loop containing nucleoside triphosphate hydrolases"/>
    <property type="match status" value="1"/>
</dbReference>
<dbReference type="PROSITE" id="PS51419">
    <property type="entry name" value="RAB"/>
    <property type="match status" value="1"/>
</dbReference>
<proteinExistence type="evidence at transcript level"/>
<name>RAB2A_MAIZE</name>
<comment type="function">
    <text evidence="2">Protein transport. Probably involved in vesicular traffic.</text>
</comment>
<comment type="subcellular location">
    <subcellularLocation>
        <location evidence="2">Endoplasmic reticulum membrane</location>
        <topology evidence="2">Lipid-anchor</topology>
    </subcellularLocation>
    <subcellularLocation>
        <location evidence="2">Golgi apparatus membrane</location>
        <topology evidence="2">Lipid-anchor</topology>
    </subcellularLocation>
</comment>
<comment type="similarity">
    <text evidence="4">Belongs to the small GTPase superfamily. Rab family.</text>
</comment>
<feature type="chain" id="PRO_0000121073" description="Ras-related protein Rab-2-A">
    <location>
        <begin position="1"/>
        <end position="209"/>
    </location>
</feature>
<feature type="short sequence motif" description="Effector region" evidence="1">
    <location>
        <begin position="35"/>
        <end position="43"/>
    </location>
</feature>
<feature type="binding site" evidence="2">
    <location>
        <begin position="13"/>
        <end position="21"/>
    </location>
    <ligand>
        <name>GTP</name>
        <dbReference type="ChEBI" id="CHEBI:37565"/>
    </ligand>
</feature>
<feature type="binding site" evidence="3">
    <location>
        <begin position="61"/>
        <end position="65"/>
    </location>
    <ligand>
        <name>GTP</name>
        <dbReference type="ChEBI" id="CHEBI:37565"/>
    </ligand>
</feature>
<feature type="binding site" evidence="2">
    <location>
        <begin position="119"/>
        <end position="122"/>
    </location>
    <ligand>
        <name>GTP</name>
        <dbReference type="ChEBI" id="CHEBI:37565"/>
    </ligand>
</feature>
<feature type="binding site" evidence="2">
    <location>
        <begin position="149"/>
        <end position="151"/>
    </location>
    <ligand>
        <name>GTP</name>
        <dbReference type="ChEBI" id="CHEBI:37565"/>
    </ligand>
</feature>
<feature type="lipid moiety-binding region" description="S-geranylgeranyl cysteine" evidence="1">
    <location>
        <position position="207"/>
    </location>
</feature>
<feature type="lipid moiety-binding region" description="S-geranylgeranyl cysteine" evidence="1">
    <location>
        <position position="208"/>
    </location>
</feature>
<feature type="sequence conflict" description="In Ref. 1; AAA63901." ref="1">
    <original>T</original>
    <variation>N</variation>
    <location>
        <position position="49"/>
    </location>
</feature>
<organism>
    <name type="scientific">Zea mays</name>
    <name type="common">Maize</name>
    <dbReference type="NCBI Taxonomy" id="4577"/>
    <lineage>
        <taxon>Eukaryota</taxon>
        <taxon>Viridiplantae</taxon>
        <taxon>Streptophyta</taxon>
        <taxon>Embryophyta</taxon>
        <taxon>Tracheophyta</taxon>
        <taxon>Spermatophyta</taxon>
        <taxon>Magnoliopsida</taxon>
        <taxon>Liliopsida</taxon>
        <taxon>Poales</taxon>
        <taxon>Poaceae</taxon>
        <taxon>PACMAD clade</taxon>
        <taxon>Panicoideae</taxon>
        <taxon>Andropogonodae</taxon>
        <taxon>Andropogoneae</taxon>
        <taxon>Tripsacinae</taxon>
        <taxon>Zea</taxon>
    </lineage>
</organism>